<feature type="chain" id="PRO_0000278011" description="Phenylalanine--tRNA ligase beta subunit">
    <location>
        <begin position="1"/>
        <end position="870"/>
    </location>
</feature>
<feature type="domain" description="tRNA-binding">
    <location>
        <begin position="39"/>
        <end position="148"/>
    </location>
</feature>
<feature type="domain" description="B5">
    <location>
        <begin position="427"/>
        <end position="551"/>
    </location>
</feature>
<feature type="domain" description="RPE1 insert">
    <location>
        <begin position="450"/>
        <end position="498"/>
    </location>
</feature>
<feature type="domain" description="FDX-ACB">
    <location>
        <begin position="776"/>
        <end position="869"/>
    </location>
</feature>
<feature type="binding site" evidence="1">
    <location>
        <position position="529"/>
    </location>
    <ligand>
        <name>Mg(2+)</name>
        <dbReference type="ChEBI" id="CHEBI:18420"/>
        <note>shared with alpha subunit</note>
    </ligand>
</feature>
<feature type="binding site" evidence="1">
    <location>
        <position position="535"/>
    </location>
    <ligand>
        <name>Mg(2+)</name>
        <dbReference type="ChEBI" id="CHEBI:18420"/>
        <note>shared with alpha subunit</note>
    </ligand>
</feature>
<feature type="binding site" evidence="1">
    <location>
        <position position="538"/>
    </location>
    <ligand>
        <name>Mg(2+)</name>
        <dbReference type="ChEBI" id="CHEBI:18420"/>
        <note>shared with alpha subunit</note>
    </ligand>
</feature>
<feature type="binding site" evidence="1">
    <location>
        <position position="539"/>
    </location>
    <ligand>
        <name>Mg(2+)</name>
        <dbReference type="ChEBI" id="CHEBI:18420"/>
        <note>shared with alpha subunit</note>
    </ligand>
</feature>
<sequence length="870" mass="96919">MKFTLSWLKQFLDTSASVTEIAESLTAIGLEVEEIIDKAADLQKFEVAYIVSTKPHPSADKLKICEVETKNGNLQIVCGASNARAGIKVVLANIGVEIPNGKFKIKESNIRGEKSCGMLCSEEELFLASESEGIIELPEDAVVGEPFTKYYGLDDPVFVINVTPNRGDALSVYGIARDLSAKGIGTLKELEIPAVKSTFSSKVKLNIKDKEACPLFTFREIRNLKNKPSPDWLQKLLKNIGVKPISSIVDVTNYMSYSFGQPMHAYDADKIGGGIVVDRHCEENVIPRLDCGISGEESVIQDPVVKPRDDNRGFHALNDKKYLLNKSDLVIKDENGVQALAGIIGGISSSCDSNTMNILLEAACFNAKMVAASGRRLQIDTDSRYRFERNIDRNFTEKALNIATDLILSICDGGEVSEILISGEKEPAKKTLDFPAGYLEKITGIKLTILLHNEANKGEFVGNTEHSIAAYKEVREDASTGLTPKLPLEASYVKGLNIKGIEAILNKLGFATDTEKDVIKITPPSWRHDINILEDVVEEITRIYGYDKIESIKLPELEQDNNRLREHKRISSFKRILASKGYDEVVTNSFMNSKDAKLFTELKDELFLLNPISVEDNYMRPTIVPNLLDIVRKNLARSIKDMAFFEVGPNFIGLNTEATYLTAILTGSYNSKNPHSIGRSYDIFDLKSDLETVFDYAGLSIEKCIVSNQATPLYYHPTRSVNLALGKNLLGHFGQIHPKILKHYDIKEEVFAFELNITNLPAPKAKFGKRDEFIISDYQANFRDYAFIIARDQPVGEIISYINNFNKKLVKSVILFDIYSGDKLPSGKKSIAIRVGLQADDRTLNEDDLNSFSKDLIANIEQKFQGTLRE</sequence>
<comment type="catalytic activity">
    <reaction>
        <text>tRNA(Phe) + L-phenylalanine + ATP = L-phenylalanyl-tRNA(Phe) + AMP + diphosphate + H(+)</text>
        <dbReference type="Rhea" id="RHEA:19413"/>
        <dbReference type="Rhea" id="RHEA-COMP:9668"/>
        <dbReference type="Rhea" id="RHEA-COMP:9699"/>
        <dbReference type="ChEBI" id="CHEBI:15378"/>
        <dbReference type="ChEBI" id="CHEBI:30616"/>
        <dbReference type="ChEBI" id="CHEBI:33019"/>
        <dbReference type="ChEBI" id="CHEBI:58095"/>
        <dbReference type="ChEBI" id="CHEBI:78442"/>
        <dbReference type="ChEBI" id="CHEBI:78531"/>
        <dbReference type="ChEBI" id="CHEBI:456215"/>
        <dbReference type="EC" id="6.1.1.20"/>
    </reaction>
</comment>
<comment type="cofactor">
    <cofactor evidence="1">
        <name>Mg(2+)</name>
        <dbReference type="ChEBI" id="CHEBI:18420"/>
    </cofactor>
    <text evidence="1">Binds 2 magnesium ions per tetramer.</text>
</comment>
<comment type="subunit">
    <text evidence="1">Tetramer of two alpha and two beta subunits.</text>
</comment>
<comment type="subcellular location">
    <subcellularLocation>
        <location evidence="1">Cytoplasm</location>
    </subcellularLocation>
</comment>
<comment type="similarity">
    <text evidence="2">Belongs to the phenylalanyl-tRNA synthetase beta subunit family. Type 1 subfamily.</text>
</comment>
<gene>
    <name type="primary">pheT</name>
    <name type="ordered locus">RBE_0655</name>
</gene>
<dbReference type="EC" id="6.1.1.20"/>
<dbReference type="EMBL" id="CP000087">
    <property type="protein sequence ID" value="ABE04736.1"/>
    <property type="molecule type" value="Genomic_DNA"/>
</dbReference>
<dbReference type="RefSeq" id="WP_011477324.1">
    <property type="nucleotide sequence ID" value="NC_007940.1"/>
</dbReference>
<dbReference type="SMR" id="Q1RIS8"/>
<dbReference type="KEGG" id="rbe:RBE_0655"/>
<dbReference type="eggNOG" id="COG0072">
    <property type="taxonomic scope" value="Bacteria"/>
</dbReference>
<dbReference type="eggNOG" id="COG0073">
    <property type="taxonomic scope" value="Bacteria"/>
</dbReference>
<dbReference type="HOGENOM" id="CLU_016891_0_0_5"/>
<dbReference type="OrthoDB" id="9805455at2"/>
<dbReference type="Proteomes" id="UP000001951">
    <property type="component" value="Chromosome"/>
</dbReference>
<dbReference type="GO" id="GO:0009328">
    <property type="term" value="C:phenylalanine-tRNA ligase complex"/>
    <property type="evidence" value="ECO:0007669"/>
    <property type="project" value="TreeGrafter"/>
</dbReference>
<dbReference type="GO" id="GO:0005524">
    <property type="term" value="F:ATP binding"/>
    <property type="evidence" value="ECO:0007669"/>
    <property type="project" value="UniProtKB-UniRule"/>
</dbReference>
<dbReference type="GO" id="GO:0000287">
    <property type="term" value="F:magnesium ion binding"/>
    <property type="evidence" value="ECO:0007669"/>
    <property type="project" value="UniProtKB-UniRule"/>
</dbReference>
<dbReference type="GO" id="GO:0004826">
    <property type="term" value="F:phenylalanine-tRNA ligase activity"/>
    <property type="evidence" value="ECO:0007669"/>
    <property type="project" value="UniProtKB-UniRule"/>
</dbReference>
<dbReference type="GO" id="GO:0000049">
    <property type="term" value="F:tRNA binding"/>
    <property type="evidence" value="ECO:0007669"/>
    <property type="project" value="UniProtKB-KW"/>
</dbReference>
<dbReference type="GO" id="GO:0006432">
    <property type="term" value="P:phenylalanyl-tRNA aminoacylation"/>
    <property type="evidence" value="ECO:0007669"/>
    <property type="project" value="UniProtKB-UniRule"/>
</dbReference>
<dbReference type="CDD" id="cd00769">
    <property type="entry name" value="PheRS_beta_core"/>
    <property type="match status" value="1"/>
</dbReference>
<dbReference type="CDD" id="cd02796">
    <property type="entry name" value="tRNA_bind_bactPheRS"/>
    <property type="match status" value="1"/>
</dbReference>
<dbReference type="FunFam" id="2.40.50.140:FF:000045">
    <property type="entry name" value="Phenylalanine--tRNA ligase beta subunit"/>
    <property type="match status" value="1"/>
</dbReference>
<dbReference type="Gene3D" id="3.30.56.10">
    <property type="match status" value="2"/>
</dbReference>
<dbReference type="Gene3D" id="3.30.930.10">
    <property type="entry name" value="Bira Bifunctional Protein, Domain 2"/>
    <property type="match status" value="1"/>
</dbReference>
<dbReference type="Gene3D" id="3.30.70.380">
    <property type="entry name" value="Ferrodoxin-fold anticodon-binding domain"/>
    <property type="match status" value="1"/>
</dbReference>
<dbReference type="Gene3D" id="2.40.50.140">
    <property type="entry name" value="Nucleic acid-binding proteins"/>
    <property type="match status" value="1"/>
</dbReference>
<dbReference type="Gene3D" id="3.50.40.10">
    <property type="entry name" value="Phenylalanyl-trna Synthetase, Chain B, domain 3"/>
    <property type="match status" value="1"/>
</dbReference>
<dbReference type="HAMAP" id="MF_00283">
    <property type="entry name" value="Phe_tRNA_synth_beta1"/>
    <property type="match status" value="1"/>
</dbReference>
<dbReference type="InterPro" id="IPR045864">
    <property type="entry name" value="aa-tRNA-synth_II/BPL/LPL"/>
</dbReference>
<dbReference type="InterPro" id="IPR005146">
    <property type="entry name" value="B3/B4_tRNA-bd"/>
</dbReference>
<dbReference type="InterPro" id="IPR009061">
    <property type="entry name" value="DNA-bd_dom_put_sf"/>
</dbReference>
<dbReference type="InterPro" id="IPR005121">
    <property type="entry name" value="Fdx_antiC-bd"/>
</dbReference>
<dbReference type="InterPro" id="IPR036690">
    <property type="entry name" value="Fdx_antiC-bd_sf"/>
</dbReference>
<dbReference type="InterPro" id="IPR012340">
    <property type="entry name" value="NA-bd_OB-fold"/>
</dbReference>
<dbReference type="InterPro" id="IPR045060">
    <property type="entry name" value="Phe-tRNA-ligase_IIc_bsu"/>
</dbReference>
<dbReference type="InterPro" id="IPR004532">
    <property type="entry name" value="Phe-tRNA-ligase_IIc_bsu_bact"/>
</dbReference>
<dbReference type="InterPro" id="IPR020825">
    <property type="entry name" value="Phe-tRNA_synthase-like_B3/B4"/>
</dbReference>
<dbReference type="InterPro" id="IPR041616">
    <property type="entry name" value="PheRS_beta_core"/>
</dbReference>
<dbReference type="InterPro" id="IPR005728">
    <property type="entry name" value="RPE1"/>
</dbReference>
<dbReference type="InterPro" id="IPR002547">
    <property type="entry name" value="tRNA-bd_dom"/>
</dbReference>
<dbReference type="InterPro" id="IPR033714">
    <property type="entry name" value="tRNA_bind_bactPheRS"/>
</dbReference>
<dbReference type="InterPro" id="IPR005147">
    <property type="entry name" value="tRNA_synthase_B5-dom"/>
</dbReference>
<dbReference type="NCBIfam" id="TIGR00472">
    <property type="entry name" value="pheT_bact"/>
    <property type="match status" value="1"/>
</dbReference>
<dbReference type="NCBIfam" id="TIGR01045">
    <property type="entry name" value="RPE1"/>
    <property type="match status" value="1"/>
</dbReference>
<dbReference type="NCBIfam" id="NF045760">
    <property type="entry name" value="YtpR"/>
    <property type="match status" value="1"/>
</dbReference>
<dbReference type="PANTHER" id="PTHR10947:SF0">
    <property type="entry name" value="PHENYLALANINE--TRNA LIGASE BETA SUBUNIT"/>
    <property type="match status" value="1"/>
</dbReference>
<dbReference type="PANTHER" id="PTHR10947">
    <property type="entry name" value="PHENYLALANYL-TRNA SYNTHETASE BETA CHAIN AND LEUCINE-RICH REPEAT-CONTAINING PROTEIN 47"/>
    <property type="match status" value="1"/>
</dbReference>
<dbReference type="Pfam" id="PF03483">
    <property type="entry name" value="B3_4"/>
    <property type="match status" value="1"/>
</dbReference>
<dbReference type="Pfam" id="PF03484">
    <property type="entry name" value="B5"/>
    <property type="match status" value="1"/>
</dbReference>
<dbReference type="Pfam" id="PF03147">
    <property type="entry name" value="FDX-ACB"/>
    <property type="match status" value="1"/>
</dbReference>
<dbReference type="Pfam" id="PF01588">
    <property type="entry name" value="tRNA_bind"/>
    <property type="match status" value="1"/>
</dbReference>
<dbReference type="Pfam" id="PF17759">
    <property type="entry name" value="tRNA_synthFbeta"/>
    <property type="match status" value="1"/>
</dbReference>
<dbReference type="SMART" id="SM00873">
    <property type="entry name" value="B3_4"/>
    <property type="match status" value="1"/>
</dbReference>
<dbReference type="SMART" id="SM00874">
    <property type="entry name" value="B5"/>
    <property type="match status" value="1"/>
</dbReference>
<dbReference type="SMART" id="SM00896">
    <property type="entry name" value="FDX-ACB"/>
    <property type="match status" value="1"/>
</dbReference>
<dbReference type="SUPFAM" id="SSF54991">
    <property type="entry name" value="Anticodon-binding domain of PheRS"/>
    <property type="match status" value="1"/>
</dbReference>
<dbReference type="SUPFAM" id="SSF55681">
    <property type="entry name" value="Class II aaRS and biotin synthetases"/>
    <property type="match status" value="1"/>
</dbReference>
<dbReference type="SUPFAM" id="SSF50249">
    <property type="entry name" value="Nucleic acid-binding proteins"/>
    <property type="match status" value="1"/>
</dbReference>
<dbReference type="SUPFAM" id="SSF56037">
    <property type="entry name" value="PheT/TilS domain"/>
    <property type="match status" value="1"/>
</dbReference>
<dbReference type="SUPFAM" id="SSF46955">
    <property type="entry name" value="Putative DNA-binding domain"/>
    <property type="match status" value="1"/>
</dbReference>
<dbReference type="PROSITE" id="PS51483">
    <property type="entry name" value="B5"/>
    <property type="match status" value="1"/>
</dbReference>
<dbReference type="PROSITE" id="PS51447">
    <property type="entry name" value="FDX_ACB"/>
    <property type="match status" value="1"/>
</dbReference>
<dbReference type="PROSITE" id="PS50886">
    <property type="entry name" value="TRBD"/>
    <property type="match status" value="1"/>
</dbReference>
<evidence type="ECO:0000250" key="1"/>
<evidence type="ECO:0000305" key="2"/>
<organism>
    <name type="scientific">Rickettsia bellii (strain RML369-C)</name>
    <dbReference type="NCBI Taxonomy" id="336407"/>
    <lineage>
        <taxon>Bacteria</taxon>
        <taxon>Pseudomonadati</taxon>
        <taxon>Pseudomonadota</taxon>
        <taxon>Alphaproteobacteria</taxon>
        <taxon>Rickettsiales</taxon>
        <taxon>Rickettsiaceae</taxon>
        <taxon>Rickettsieae</taxon>
        <taxon>Rickettsia</taxon>
        <taxon>belli group</taxon>
    </lineage>
</organism>
<keyword id="KW-0030">Aminoacyl-tRNA synthetase</keyword>
<keyword id="KW-0067">ATP-binding</keyword>
<keyword id="KW-0963">Cytoplasm</keyword>
<keyword id="KW-0436">Ligase</keyword>
<keyword id="KW-0460">Magnesium</keyword>
<keyword id="KW-0479">Metal-binding</keyword>
<keyword id="KW-0547">Nucleotide-binding</keyword>
<keyword id="KW-0648">Protein biosynthesis</keyword>
<keyword id="KW-0694">RNA-binding</keyword>
<keyword id="KW-0820">tRNA-binding</keyword>
<reference key="1">
    <citation type="journal article" date="2006" name="PLoS Genet.">
        <title>Genome sequence of Rickettsia bellii illuminates the role of amoebae in gene exchanges between intracellular pathogens.</title>
        <authorList>
            <person name="Ogata H."/>
            <person name="La Scola B."/>
            <person name="Audic S."/>
            <person name="Renesto P."/>
            <person name="Blanc G."/>
            <person name="Robert C."/>
            <person name="Fournier P.-E."/>
            <person name="Claverie J.-M."/>
            <person name="Raoult D."/>
        </authorList>
    </citation>
    <scope>NUCLEOTIDE SEQUENCE [LARGE SCALE GENOMIC DNA]</scope>
    <source>
        <strain>RML369-C</strain>
    </source>
</reference>
<protein>
    <recommendedName>
        <fullName>Phenylalanine--tRNA ligase beta subunit</fullName>
        <ecNumber>6.1.1.20</ecNumber>
    </recommendedName>
    <alternativeName>
        <fullName>Phenylalanyl-tRNA synthetase beta subunit</fullName>
        <shortName>PheRS</shortName>
    </alternativeName>
</protein>
<name>SYFB_RICBR</name>
<proteinExistence type="inferred from homology"/>
<accession>Q1RIS8</accession>